<organism>
    <name type="scientific">Streptomyces viridochromogenes</name>
    <dbReference type="NCBI Taxonomy" id="1938"/>
    <lineage>
        <taxon>Bacteria</taxon>
        <taxon>Bacillati</taxon>
        <taxon>Actinomycetota</taxon>
        <taxon>Actinomycetes</taxon>
        <taxon>Kitasatosporales</taxon>
        <taxon>Streptomycetaceae</taxon>
        <taxon>Streptomyces</taxon>
    </lineage>
</organism>
<accession>P19435</accession>
<evidence type="ECO:0000256" key="1">
    <source>
        <dbReference type="SAM" id="MobiDB-lite"/>
    </source>
</evidence>
<protein>
    <recommendedName>
        <fullName>Uncharacterized 23.9 kDa protein in glnII region</fullName>
    </recommendedName>
    <alternativeName>
        <fullName>ORF2</fullName>
    </alternativeName>
</protein>
<proteinExistence type="predicted"/>
<feature type="chain" id="PRO_0000066233" description="Uncharacterized 23.9 kDa protein in glnII region">
    <location>
        <begin position="1"/>
        <end position="240"/>
    </location>
</feature>
<feature type="region of interest" description="Disordered" evidence="1">
    <location>
        <begin position="93"/>
        <end position="160"/>
    </location>
</feature>
<feature type="compositionally biased region" description="Low complexity" evidence="1">
    <location>
        <begin position="110"/>
        <end position="119"/>
    </location>
</feature>
<feature type="compositionally biased region" description="Low complexity" evidence="1">
    <location>
        <begin position="129"/>
        <end position="150"/>
    </location>
</feature>
<dbReference type="EMBL" id="X52842">
    <property type="protein sequence ID" value="CAA37027.1"/>
    <property type="molecule type" value="Genomic_DNA"/>
</dbReference>
<dbReference type="PIR" id="B36724">
    <property type="entry name" value="B36724"/>
</dbReference>
<dbReference type="SMR" id="P19435"/>
<dbReference type="Gene3D" id="2.40.40.10">
    <property type="entry name" value="RlpA-like domain"/>
    <property type="match status" value="1"/>
</dbReference>
<dbReference type="InterPro" id="IPR036908">
    <property type="entry name" value="RlpA-like_sf"/>
</dbReference>
<sequence>MSRRRTLGPKKKIALLVSAVTVAGGGAFVMASTSNASPPTTKSAAESTACLGLATALGNNEKFIADQQANPDAQSEARIANRQAVIEEIKRKQEASGCTVGESAQDSQTAQPSQPAQGGEQAGGGEQAGGAEEAGGAQASQPAESAPAENAGGGAAASGQQVCNGSTVTLSGEGGAPAASSNQFPAGTKLKVTNLDNNKSTTVEVTSVSGSCVLLNNAAFEQVREAGKFLIRRAVIEKVG</sequence>
<name>YGL2_STRVR</name>
<reference key="1">
    <citation type="journal article" date="1990" name="J. Bacteriol.">
        <title>Overexpression of a Streptomyces viridochromogenes gene (glnII) encoding a glutamine synthetase similar to those of eucaryotes confers resistance against the antibiotic phosphinothricyl-alanyl-alanine.</title>
        <authorList>
            <person name="Behrmann I."/>
            <person name="Hillemann D."/>
            <person name="Puehler A."/>
            <person name="Strauch E."/>
            <person name="Wohlleben W."/>
        </authorList>
    </citation>
    <scope>NUCLEOTIDE SEQUENCE [GENOMIC DNA]</scope>
    <source>
        <strain>ES2</strain>
    </source>
</reference>